<keyword id="KW-1185">Reference proteome</keyword>
<keyword id="KW-0686">Riboflavin biosynthesis</keyword>
<keyword id="KW-0808">Transferase</keyword>
<gene>
    <name evidence="1" type="primary">ribH</name>
    <name type="ordered locus">Ccur92_04340</name>
    <name type="ORF">CCV52592_1181</name>
</gene>
<reference key="1">
    <citation type="submission" date="2007-07" db="EMBL/GenBank/DDBJ databases">
        <title>Genome sequence of Campylobacter curvus 525.92 isolated from human feces.</title>
        <authorList>
            <person name="Fouts D.E."/>
            <person name="Mongodin E.F."/>
            <person name="Puiu D."/>
            <person name="Sebastian Y."/>
            <person name="Miller W.G."/>
            <person name="Mandrell R.E."/>
            <person name="Lastovica A.J."/>
            <person name="Nelson K.E."/>
        </authorList>
    </citation>
    <scope>NUCLEOTIDE SEQUENCE [LARGE SCALE GENOMIC DNA]</scope>
    <source>
        <strain>525.92</strain>
    </source>
</reference>
<dbReference type="EC" id="2.5.1.78" evidence="1"/>
<dbReference type="EMBL" id="CP000767">
    <property type="protein sequence ID" value="EAU00990.1"/>
    <property type="molecule type" value="Genomic_DNA"/>
</dbReference>
<dbReference type="RefSeq" id="WP_011991932.1">
    <property type="nucleotide sequence ID" value="NC_009715.2"/>
</dbReference>
<dbReference type="SMR" id="A7GWZ6"/>
<dbReference type="STRING" id="360105.CCV52592_1181"/>
<dbReference type="KEGG" id="ccv:CCV52592_1181"/>
<dbReference type="HOGENOM" id="CLU_089358_1_1_7"/>
<dbReference type="OrthoDB" id="9809709at2"/>
<dbReference type="UniPathway" id="UPA00275">
    <property type="reaction ID" value="UER00404"/>
</dbReference>
<dbReference type="Proteomes" id="UP000006380">
    <property type="component" value="Chromosome"/>
</dbReference>
<dbReference type="GO" id="GO:0005829">
    <property type="term" value="C:cytosol"/>
    <property type="evidence" value="ECO:0007669"/>
    <property type="project" value="TreeGrafter"/>
</dbReference>
<dbReference type="GO" id="GO:0009349">
    <property type="term" value="C:riboflavin synthase complex"/>
    <property type="evidence" value="ECO:0007669"/>
    <property type="project" value="InterPro"/>
</dbReference>
<dbReference type="GO" id="GO:0000906">
    <property type="term" value="F:6,7-dimethyl-8-ribityllumazine synthase activity"/>
    <property type="evidence" value="ECO:0007669"/>
    <property type="project" value="UniProtKB-UniRule"/>
</dbReference>
<dbReference type="GO" id="GO:0009231">
    <property type="term" value="P:riboflavin biosynthetic process"/>
    <property type="evidence" value="ECO:0007669"/>
    <property type="project" value="UniProtKB-UniRule"/>
</dbReference>
<dbReference type="CDD" id="cd09209">
    <property type="entry name" value="Lumazine_synthase-I"/>
    <property type="match status" value="1"/>
</dbReference>
<dbReference type="FunFam" id="3.40.50.960:FF:000001">
    <property type="entry name" value="6,7-dimethyl-8-ribityllumazine synthase"/>
    <property type="match status" value="1"/>
</dbReference>
<dbReference type="Gene3D" id="3.40.50.960">
    <property type="entry name" value="Lumazine/riboflavin synthase"/>
    <property type="match status" value="1"/>
</dbReference>
<dbReference type="HAMAP" id="MF_00178">
    <property type="entry name" value="Lumazine_synth"/>
    <property type="match status" value="1"/>
</dbReference>
<dbReference type="InterPro" id="IPR034964">
    <property type="entry name" value="LS"/>
</dbReference>
<dbReference type="InterPro" id="IPR002180">
    <property type="entry name" value="LS/RS"/>
</dbReference>
<dbReference type="InterPro" id="IPR036467">
    <property type="entry name" value="LS/RS_sf"/>
</dbReference>
<dbReference type="NCBIfam" id="TIGR00114">
    <property type="entry name" value="lumazine-synth"/>
    <property type="match status" value="1"/>
</dbReference>
<dbReference type="PANTHER" id="PTHR21058:SF0">
    <property type="entry name" value="6,7-DIMETHYL-8-RIBITYLLUMAZINE SYNTHASE"/>
    <property type="match status" value="1"/>
</dbReference>
<dbReference type="PANTHER" id="PTHR21058">
    <property type="entry name" value="6,7-DIMETHYL-8-RIBITYLLUMAZINE SYNTHASE DMRL SYNTHASE LUMAZINE SYNTHASE"/>
    <property type="match status" value="1"/>
</dbReference>
<dbReference type="Pfam" id="PF00885">
    <property type="entry name" value="DMRL_synthase"/>
    <property type="match status" value="1"/>
</dbReference>
<dbReference type="SUPFAM" id="SSF52121">
    <property type="entry name" value="Lumazine synthase"/>
    <property type="match status" value="1"/>
</dbReference>
<organism>
    <name type="scientific">Campylobacter curvus (strain 525.92)</name>
    <dbReference type="NCBI Taxonomy" id="360105"/>
    <lineage>
        <taxon>Bacteria</taxon>
        <taxon>Pseudomonadati</taxon>
        <taxon>Campylobacterota</taxon>
        <taxon>Epsilonproteobacteria</taxon>
        <taxon>Campylobacterales</taxon>
        <taxon>Campylobacteraceae</taxon>
        <taxon>Campylobacter</taxon>
    </lineage>
</organism>
<name>RISB_CAMC5</name>
<feature type="chain" id="PRO_1000058365" description="6,7-dimethyl-8-ribityllumazine synthase">
    <location>
        <begin position="1"/>
        <end position="156"/>
    </location>
</feature>
<feature type="active site" description="Proton donor" evidence="1">
    <location>
        <position position="89"/>
    </location>
</feature>
<feature type="binding site" evidence="1">
    <location>
        <position position="23"/>
    </location>
    <ligand>
        <name>5-amino-6-(D-ribitylamino)uracil</name>
        <dbReference type="ChEBI" id="CHEBI:15934"/>
    </ligand>
</feature>
<feature type="binding site" evidence="1">
    <location>
        <begin position="57"/>
        <end position="59"/>
    </location>
    <ligand>
        <name>5-amino-6-(D-ribitylamino)uracil</name>
        <dbReference type="ChEBI" id="CHEBI:15934"/>
    </ligand>
</feature>
<feature type="binding site" evidence="1">
    <location>
        <begin position="81"/>
        <end position="83"/>
    </location>
    <ligand>
        <name>5-amino-6-(D-ribitylamino)uracil</name>
        <dbReference type="ChEBI" id="CHEBI:15934"/>
    </ligand>
</feature>
<feature type="binding site" evidence="1">
    <location>
        <begin position="86"/>
        <end position="87"/>
    </location>
    <ligand>
        <name>(2S)-2-hydroxy-3-oxobutyl phosphate</name>
        <dbReference type="ChEBI" id="CHEBI:58830"/>
    </ligand>
</feature>
<feature type="binding site" evidence="1">
    <location>
        <position position="114"/>
    </location>
    <ligand>
        <name>5-amino-6-(D-ribitylamino)uracil</name>
        <dbReference type="ChEBI" id="CHEBI:15934"/>
    </ligand>
</feature>
<feature type="binding site" evidence="1">
    <location>
        <position position="128"/>
    </location>
    <ligand>
        <name>(2S)-2-hydroxy-3-oxobutyl phosphate</name>
        <dbReference type="ChEBI" id="CHEBI:58830"/>
    </ligand>
</feature>
<sequence length="156" mass="16578">MKIIEGKLALSGKEKIAIINARFNHIVTDRLVEGARDAFLRHGGDEANLSLILVPGAFEIPMALEKALASGKFDAVCCVGAVIRGSTPHFDYVSAETTKGIANVTLKYGKPVSFGVLTVDNIEQAIERAGSKAGNKGFEAMTGVIEMLNLYKNLGA</sequence>
<proteinExistence type="inferred from homology"/>
<accession>A7GWZ6</accession>
<protein>
    <recommendedName>
        <fullName evidence="1">6,7-dimethyl-8-ribityllumazine synthase</fullName>
        <shortName evidence="1">DMRL synthase</shortName>
        <shortName evidence="1">LS</shortName>
        <shortName evidence="1">Lumazine synthase</shortName>
        <ecNumber evidence="1">2.5.1.78</ecNumber>
    </recommendedName>
</protein>
<comment type="function">
    <text evidence="1">Catalyzes the formation of 6,7-dimethyl-8-ribityllumazine by condensation of 5-amino-6-(D-ribitylamino)uracil with 3,4-dihydroxy-2-butanone 4-phosphate. This is the penultimate step in the biosynthesis of riboflavin.</text>
</comment>
<comment type="catalytic activity">
    <reaction evidence="1">
        <text>(2S)-2-hydroxy-3-oxobutyl phosphate + 5-amino-6-(D-ribitylamino)uracil = 6,7-dimethyl-8-(1-D-ribityl)lumazine + phosphate + 2 H2O + H(+)</text>
        <dbReference type="Rhea" id="RHEA:26152"/>
        <dbReference type="ChEBI" id="CHEBI:15377"/>
        <dbReference type="ChEBI" id="CHEBI:15378"/>
        <dbReference type="ChEBI" id="CHEBI:15934"/>
        <dbReference type="ChEBI" id="CHEBI:43474"/>
        <dbReference type="ChEBI" id="CHEBI:58201"/>
        <dbReference type="ChEBI" id="CHEBI:58830"/>
        <dbReference type="EC" id="2.5.1.78"/>
    </reaction>
</comment>
<comment type="pathway">
    <text evidence="1">Cofactor biosynthesis; riboflavin biosynthesis; riboflavin from 2-hydroxy-3-oxobutyl phosphate and 5-amino-6-(D-ribitylamino)uracil: step 1/2.</text>
</comment>
<comment type="similarity">
    <text evidence="1">Belongs to the DMRL synthase family.</text>
</comment>
<evidence type="ECO:0000255" key="1">
    <source>
        <dbReference type="HAMAP-Rule" id="MF_00178"/>
    </source>
</evidence>